<proteinExistence type="evidence at transcript level"/>
<protein>
    <recommendedName>
        <fullName>Peroxidase 67</fullName>
        <shortName>Atperox P67</shortName>
        <ecNumber>1.11.1.7</ecNumber>
    </recommendedName>
    <alternativeName>
        <fullName>ATP44</fullName>
    </alternativeName>
</protein>
<keyword id="KW-0106">Calcium</keyword>
<keyword id="KW-1015">Disulfide bond</keyword>
<keyword id="KW-0325">Glycoprotein</keyword>
<keyword id="KW-0349">Heme</keyword>
<keyword id="KW-0376">Hydrogen peroxide</keyword>
<keyword id="KW-0408">Iron</keyword>
<keyword id="KW-0479">Metal-binding</keyword>
<keyword id="KW-0560">Oxidoreductase</keyword>
<keyword id="KW-0575">Peroxidase</keyword>
<keyword id="KW-0873">Pyrrolidone carboxylic acid</keyword>
<keyword id="KW-1185">Reference proteome</keyword>
<keyword id="KW-0964">Secreted</keyword>
<keyword id="KW-0732">Signal</keyword>
<sequence>MLKVVLLMMIMMLASQSEAQLNRDFYKESCPSLFLVVRRVVKRAVAREPRMGASLLRLFFHDCFVNGCDGSLLLDDTPSFLGEKTSGPSNNSVRGFEVIDKIKFKVEKMCPGIVSCADILAITARDSVLLLGGPGWSVKLGRRDSTTANFAAANSGVIPPPITTLSNLINRFKAQGLSTRDMVALSGAHTIGRAQCVTFRNRIYNASNIDTSFAISKRRNCPATSGSGDNKKANLDVRSPDRFDHGFYKQLLSKKGLLTSDQVLFNNGPTDSLVIAYSHNLNAFYRDFARAMIKMGDISPLTGSNGQIRQNCRRPN</sequence>
<name>PER67_ARATH</name>
<comment type="function">
    <text>Removal of H(2)O(2), oxidation of toxic reductants, biosynthesis and degradation of lignin, suberization, auxin catabolism, response to environmental stresses such as wounding, pathogen attack and oxidative stress. These functions might be dependent on each isozyme/isoform in each plant tissue.</text>
</comment>
<comment type="catalytic activity">
    <reaction>
        <text>2 a phenolic donor + H2O2 = 2 a phenolic radical donor + 2 H2O</text>
        <dbReference type="Rhea" id="RHEA:56136"/>
        <dbReference type="ChEBI" id="CHEBI:15377"/>
        <dbReference type="ChEBI" id="CHEBI:16240"/>
        <dbReference type="ChEBI" id="CHEBI:139520"/>
        <dbReference type="ChEBI" id="CHEBI:139521"/>
        <dbReference type="EC" id="1.11.1.7"/>
    </reaction>
</comment>
<comment type="cofactor">
    <cofactor evidence="3">
        <name>heme b</name>
        <dbReference type="ChEBI" id="CHEBI:60344"/>
    </cofactor>
    <text evidence="3">Binds 1 heme b (iron(II)-protoporphyrin IX) group per subunit.</text>
</comment>
<comment type="cofactor">
    <cofactor evidence="3">
        <name>Ca(2+)</name>
        <dbReference type="ChEBI" id="CHEBI:29108"/>
    </cofactor>
    <text evidence="3">Binds 2 calcium ions per subunit.</text>
</comment>
<comment type="subcellular location">
    <subcellularLocation>
        <location evidence="3">Secreted</location>
    </subcellularLocation>
</comment>
<comment type="miscellaneous">
    <text>There are 73 peroxidase genes in A.thaliana.</text>
</comment>
<comment type="similarity">
    <text evidence="3">Belongs to the peroxidase family. Classical plant (class III) peroxidase subfamily.</text>
</comment>
<feature type="signal peptide" evidence="2">
    <location>
        <begin position="1"/>
        <end position="19"/>
    </location>
</feature>
<feature type="chain" id="PRO_0000023732" description="Peroxidase 67">
    <location>
        <begin position="20"/>
        <end position="316"/>
    </location>
</feature>
<feature type="active site" description="Proton acceptor" evidence="3 4">
    <location>
        <position position="61"/>
    </location>
</feature>
<feature type="binding site" evidence="3">
    <location>
        <position position="62"/>
    </location>
    <ligand>
        <name>Ca(2+)</name>
        <dbReference type="ChEBI" id="CHEBI:29108"/>
        <label>1</label>
    </ligand>
</feature>
<feature type="binding site" evidence="3">
    <location>
        <position position="65"/>
    </location>
    <ligand>
        <name>Ca(2+)</name>
        <dbReference type="ChEBI" id="CHEBI:29108"/>
        <label>1</label>
    </ligand>
</feature>
<feature type="binding site" evidence="3">
    <location>
        <position position="67"/>
    </location>
    <ligand>
        <name>Ca(2+)</name>
        <dbReference type="ChEBI" id="CHEBI:29108"/>
        <label>1</label>
    </ligand>
</feature>
<feature type="binding site" evidence="3">
    <location>
        <position position="69"/>
    </location>
    <ligand>
        <name>Ca(2+)</name>
        <dbReference type="ChEBI" id="CHEBI:29108"/>
        <label>1</label>
    </ligand>
</feature>
<feature type="binding site" evidence="3">
    <location>
        <position position="71"/>
    </location>
    <ligand>
        <name>Ca(2+)</name>
        <dbReference type="ChEBI" id="CHEBI:29108"/>
        <label>1</label>
    </ligand>
</feature>
<feature type="binding site" evidence="3">
    <location>
        <position position="159"/>
    </location>
    <ligand>
        <name>substrate</name>
    </ligand>
</feature>
<feature type="binding site" description="axial binding residue" evidence="3">
    <location>
        <position position="189"/>
    </location>
    <ligand>
        <name>heme b</name>
        <dbReference type="ChEBI" id="CHEBI:60344"/>
    </ligand>
    <ligandPart>
        <name>Fe</name>
        <dbReference type="ChEBI" id="CHEBI:18248"/>
    </ligandPart>
</feature>
<feature type="binding site" evidence="3">
    <location>
        <position position="190"/>
    </location>
    <ligand>
        <name>Ca(2+)</name>
        <dbReference type="ChEBI" id="CHEBI:29108"/>
        <label>2</label>
    </ligand>
</feature>
<feature type="binding site" evidence="3">
    <location>
        <position position="236"/>
    </location>
    <ligand>
        <name>Ca(2+)</name>
        <dbReference type="ChEBI" id="CHEBI:29108"/>
        <label>2</label>
    </ligand>
</feature>
<feature type="binding site" evidence="3">
    <location>
        <position position="239"/>
    </location>
    <ligand>
        <name>Ca(2+)</name>
        <dbReference type="ChEBI" id="CHEBI:29108"/>
        <label>2</label>
    </ligand>
</feature>
<feature type="binding site" evidence="3">
    <location>
        <position position="244"/>
    </location>
    <ligand>
        <name>Ca(2+)</name>
        <dbReference type="ChEBI" id="CHEBI:29108"/>
        <label>2</label>
    </ligand>
</feature>
<feature type="site" description="Transition state stabilizer" evidence="3">
    <location>
        <position position="57"/>
    </location>
</feature>
<feature type="modified residue" description="Pyrrolidone carboxylic acid" evidence="1 3">
    <location>
        <position position="20"/>
    </location>
</feature>
<feature type="glycosylation site" description="N-linked (GlcNAc...) asparagine" evidence="2">
    <location>
        <position position="205"/>
    </location>
</feature>
<feature type="disulfide bond" evidence="3">
    <location>
        <begin position="30"/>
        <end position="110"/>
    </location>
</feature>
<feature type="disulfide bond" evidence="3">
    <location>
        <begin position="63"/>
        <end position="68"/>
    </location>
</feature>
<feature type="disulfide bond" evidence="3">
    <location>
        <begin position="116"/>
        <end position="312"/>
    </location>
</feature>
<feature type="disulfide bond" evidence="3">
    <location>
        <begin position="196"/>
        <end position="221"/>
    </location>
</feature>
<feature type="sequence conflict" description="In Ref. 3; AAM61588." evidence="5" ref="3">
    <original>A</original>
    <variation>S</variation>
    <location>
        <position position="188"/>
    </location>
</feature>
<organism>
    <name type="scientific">Arabidopsis thaliana</name>
    <name type="common">Mouse-ear cress</name>
    <dbReference type="NCBI Taxonomy" id="3702"/>
    <lineage>
        <taxon>Eukaryota</taxon>
        <taxon>Viridiplantae</taxon>
        <taxon>Streptophyta</taxon>
        <taxon>Embryophyta</taxon>
        <taxon>Tracheophyta</taxon>
        <taxon>Spermatophyta</taxon>
        <taxon>Magnoliopsida</taxon>
        <taxon>eudicotyledons</taxon>
        <taxon>Gunneridae</taxon>
        <taxon>Pentapetalae</taxon>
        <taxon>rosids</taxon>
        <taxon>malvids</taxon>
        <taxon>Brassicales</taxon>
        <taxon>Brassicaceae</taxon>
        <taxon>Camelineae</taxon>
        <taxon>Arabidopsis</taxon>
    </lineage>
</organism>
<gene>
    <name type="primary">PER67</name>
    <name type="synonym">P67</name>
    <name type="ordered locus">At5g58390</name>
    <name type="ORF">MCK7.26</name>
</gene>
<dbReference type="EC" id="1.11.1.7"/>
<dbReference type="EMBL" id="AB019228">
    <property type="protein sequence ID" value="BAA96930.1"/>
    <property type="molecule type" value="Genomic_DNA"/>
</dbReference>
<dbReference type="EMBL" id="CP002688">
    <property type="protein sequence ID" value="AED97047.1"/>
    <property type="molecule type" value="Genomic_DNA"/>
</dbReference>
<dbReference type="EMBL" id="AY085030">
    <property type="protein sequence ID" value="AAM61588.1"/>
    <property type="molecule type" value="mRNA"/>
</dbReference>
<dbReference type="RefSeq" id="NP_200647.1">
    <property type="nucleotide sequence ID" value="NM_125225.2"/>
</dbReference>
<dbReference type="SMR" id="Q9LVL2"/>
<dbReference type="BioGRID" id="21196">
    <property type="interactions" value="1"/>
</dbReference>
<dbReference type="FunCoup" id="Q9LVL2">
    <property type="interactions" value="129"/>
</dbReference>
<dbReference type="STRING" id="3702.Q9LVL2"/>
<dbReference type="PeroxiBase" id="233">
    <property type="entry name" value="AtPrx67"/>
</dbReference>
<dbReference type="GlyCosmos" id="Q9LVL2">
    <property type="glycosylation" value="1 site, No reported glycans"/>
</dbReference>
<dbReference type="GlyGen" id="Q9LVL2">
    <property type="glycosylation" value="2 sites"/>
</dbReference>
<dbReference type="PaxDb" id="3702-AT5G58390.1"/>
<dbReference type="ProteomicsDB" id="236413"/>
<dbReference type="EnsemblPlants" id="AT5G58390.1">
    <property type="protein sequence ID" value="AT5G58390.1"/>
    <property type="gene ID" value="AT5G58390"/>
</dbReference>
<dbReference type="GeneID" id="835952"/>
<dbReference type="Gramene" id="AT5G58390.1">
    <property type="protein sequence ID" value="AT5G58390.1"/>
    <property type="gene ID" value="AT5G58390"/>
</dbReference>
<dbReference type="KEGG" id="ath:AT5G58390"/>
<dbReference type="Araport" id="AT5G58390"/>
<dbReference type="TAIR" id="AT5G58390"/>
<dbReference type="eggNOG" id="ENOG502QT8W">
    <property type="taxonomic scope" value="Eukaryota"/>
</dbReference>
<dbReference type="HOGENOM" id="CLU_010543_0_1_1"/>
<dbReference type="InParanoid" id="Q9LVL2"/>
<dbReference type="OMA" id="RCLVFRN"/>
<dbReference type="OrthoDB" id="2113341at2759"/>
<dbReference type="PhylomeDB" id="Q9LVL2"/>
<dbReference type="BioCyc" id="ARA:AT5G58390-MONOMER"/>
<dbReference type="CD-CODE" id="4299E36E">
    <property type="entry name" value="Nucleolus"/>
</dbReference>
<dbReference type="PRO" id="PR:Q9LVL2"/>
<dbReference type="Proteomes" id="UP000006548">
    <property type="component" value="Chromosome 5"/>
</dbReference>
<dbReference type="ExpressionAtlas" id="Q9LVL2">
    <property type="expression patterns" value="baseline and differential"/>
</dbReference>
<dbReference type="GO" id="GO:0005576">
    <property type="term" value="C:extracellular region"/>
    <property type="evidence" value="ECO:0007669"/>
    <property type="project" value="UniProtKB-SubCell"/>
</dbReference>
<dbReference type="GO" id="GO:0020037">
    <property type="term" value="F:heme binding"/>
    <property type="evidence" value="ECO:0007669"/>
    <property type="project" value="InterPro"/>
</dbReference>
<dbReference type="GO" id="GO:0140825">
    <property type="term" value="F:lactoperoxidase activity"/>
    <property type="evidence" value="ECO:0007669"/>
    <property type="project" value="UniProtKB-EC"/>
</dbReference>
<dbReference type="GO" id="GO:0046872">
    <property type="term" value="F:metal ion binding"/>
    <property type="evidence" value="ECO:0007669"/>
    <property type="project" value="UniProtKB-KW"/>
</dbReference>
<dbReference type="GO" id="GO:0042744">
    <property type="term" value="P:hydrogen peroxide catabolic process"/>
    <property type="evidence" value="ECO:0007669"/>
    <property type="project" value="UniProtKB-KW"/>
</dbReference>
<dbReference type="GO" id="GO:0006979">
    <property type="term" value="P:response to oxidative stress"/>
    <property type="evidence" value="ECO:0007669"/>
    <property type="project" value="InterPro"/>
</dbReference>
<dbReference type="CDD" id="cd00693">
    <property type="entry name" value="secretory_peroxidase"/>
    <property type="match status" value="1"/>
</dbReference>
<dbReference type="FunFam" id="1.10.420.10:FF:000006">
    <property type="entry name" value="Peroxidase"/>
    <property type="match status" value="1"/>
</dbReference>
<dbReference type="FunFam" id="1.10.520.10:FF:000009">
    <property type="entry name" value="Peroxidase"/>
    <property type="match status" value="1"/>
</dbReference>
<dbReference type="Gene3D" id="1.10.520.10">
    <property type="match status" value="1"/>
</dbReference>
<dbReference type="Gene3D" id="1.10.420.10">
    <property type="entry name" value="Peroxidase, domain 2"/>
    <property type="match status" value="1"/>
</dbReference>
<dbReference type="InterPro" id="IPR002016">
    <property type="entry name" value="Haem_peroxidase"/>
</dbReference>
<dbReference type="InterPro" id="IPR010255">
    <property type="entry name" value="Haem_peroxidase_sf"/>
</dbReference>
<dbReference type="InterPro" id="IPR000823">
    <property type="entry name" value="Peroxidase_pln"/>
</dbReference>
<dbReference type="InterPro" id="IPR019794">
    <property type="entry name" value="Peroxidases_AS"/>
</dbReference>
<dbReference type="InterPro" id="IPR019793">
    <property type="entry name" value="Peroxidases_heam-ligand_BS"/>
</dbReference>
<dbReference type="InterPro" id="IPR033905">
    <property type="entry name" value="Secretory_peroxidase"/>
</dbReference>
<dbReference type="PANTHER" id="PTHR31388:SF144">
    <property type="entry name" value="PEROXIDASE 67-RELATED"/>
    <property type="match status" value="1"/>
</dbReference>
<dbReference type="PANTHER" id="PTHR31388">
    <property type="entry name" value="PEROXIDASE 72-RELATED"/>
    <property type="match status" value="1"/>
</dbReference>
<dbReference type="Pfam" id="PF00141">
    <property type="entry name" value="peroxidase"/>
    <property type="match status" value="1"/>
</dbReference>
<dbReference type="PRINTS" id="PR00458">
    <property type="entry name" value="PEROXIDASE"/>
</dbReference>
<dbReference type="PRINTS" id="PR00461">
    <property type="entry name" value="PLPEROXIDASE"/>
</dbReference>
<dbReference type="SUPFAM" id="SSF48113">
    <property type="entry name" value="Heme-dependent peroxidases"/>
    <property type="match status" value="1"/>
</dbReference>
<dbReference type="PROSITE" id="PS00435">
    <property type="entry name" value="PEROXIDASE_1"/>
    <property type="match status" value="1"/>
</dbReference>
<dbReference type="PROSITE" id="PS00436">
    <property type="entry name" value="PEROXIDASE_2"/>
    <property type="match status" value="1"/>
</dbReference>
<dbReference type="PROSITE" id="PS50873">
    <property type="entry name" value="PEROXIDASE_4"/>
    <property type="match status" value="1"/>
</dbReference>
<accession>Q9LVL2</accession>
<evidence type="ECO:0000250" key="1">
    <source>
        <dbReference type="UniProtKB" id="Q42578"/>
    </source>
</evidence>
<evidence type="ECO:0000255" key="2"/>
<evidence type="ECO:0000255" key="3">
    <source>
        <dbReference type="PROSITE-ProRule" id="PRU00297"/>
    </source>
</evidence>
<evidence type="ECO:0000255" key="4">
    <source>
        <dbReference type="PROSITE-ProRule" id="PRU10012"/>
    </source>
</evidence>
<evidence type="ECO:0000305" key="5"/>
<reference key="1">
    <citation type="journal article" date="2000" name="DNA Res.">
        <title>Structural analysis of Arabidopsis thaliana chromosome 5. X. Sequence features of the regions of 3,076,755 bp covered by sixty P1 and TAC clones.</title>
        <authorList>
            <person name="Sato S."/>
            <person name="Nakamura Y."/>
            <person name="Kaneko T."/>
            <person name="Katoh T."/>
            <person name="Asamizu E."/>
            <person name="Kotani H."/>
            <person name="Tabata S."/>
        </authorList>
    </citation>
    <scope>NUCLEOTIDE SEQUENCE [LARGE SCALE GENOMIC DNA]</scope>
    <source>
        <strain>cv. Columbia</strain>
    </source>
</reference>
<reference key="2">
    <citation type="journal article" date="2017" name="Plant J.">
        <title>Araport11: a complete reannotation of the Arabidopsis thaliana reference genome.</title>
        <authorList>
            <person name="Cheng C.Y."/>
            <person name="Krishnakumar V."/>
            <person name="Chan A.P."/>
            <person name="Thibaud-Nissen F."/>
            <person name="Schobel S."/>
            <person name="Town C.D."/>
        </authorList>
    </citation>
    <scope>GENOME REANNOTATION</scope>
    <source>
        <strain>cv. Columbia</strain>
    </source>
</reference>
<reference key="3">
    <citation type="submission" date="2002-03" db="EMBL/GenBank/DDBJ databases">
        <title>Full-length cDNA from Arabidopsis thaliana.</title>
        <authorList>
            <person name="Brover V.V."/>
            <person name="Troukhan M.E."/>
            <person name="Alexandrov N.A."/>
            <person name="Lu Y.-P."/>
            <person name="Flavell R.B."/>
            <person name="Feldmann K.A."/>
        </authorList>
    </citation>
    <scope>NUCLEOTIDE SEQUENCE [LARGE SCALE MRNA]</scope>
</reference>
<reference key="4">
    <citation type="journal article" date="2002" name="Gene">
        <title>Analysis and expression of the class III peroxidase large gene family in Arabidopsis thaliana.</title>
        <authorList>
            <person name="Tognolli M."/>
            <person name="Penel C."/>
            <person name="Greppin H."/>
            <person name="Simon P."/>
        </authorList>
    </citation>
    <scope>GENE FAMILY ORGANIZATION</scope>
    <scope>NOMENCLATURE</scope>
    <source>
        <strain>cv. Columbia</strain>
    </source>
</reference>